<accession>Q7MM80</accession>
<comment type="function">
    <text evidence="1">The UvrABC repair system catalyzes the recognition and processing of DNA lesions. A damage recognition complex composed of 2 UvrA and 2 UvrB subunits scans DNA for abnormalities. Upon binding of the UvrA(2)B(2) complex to a putative damaged site, the DNA wraps around one UvrB monomer. DNA wrap is dependent on ATP binding by UvrB and probably causes local melting of the DNA helix, facilitating insertion of UvrB beta-hairpin between the DNA strands. Then UvrB probes one DNA strand for the presence of a lesion. If a lesion is found the UvrA subunits dissociate and the UvrB-DNA preincision complex is formed. This complex is subsequently bound by UvrC and the second UvrB is released. If no lesion is found, the DNA wraps around the other UvrB subunit that will check the other stand for damage.</text>
</comment>
<comment type="subunit">
    <text evidence="1">Forms a heterotetramer with UvrA during the search for lesions. Interacts with UvrC in an incision complex.</text>
</comment>
<comment type="subcellular location">
    <subcellularLocation>
        <location evidence="1">Cytoplasm</location>
    </subcellularLocation>
</comment>
<comment type="domain">
    <text evidence="1">The beta-hairpin motif is involved in DNA binding.</text>
</comment>
<comment type="similarity">
    <text evidence="1">Belongs to the UvrB family.</text>
</comment>
<comment type="sequence caution" evidence="2">
    <conflict type="erroneous initiation">
        <sequence resource="EMBL-CDS" id="BAC93957"/>
    </conflict>
</comment>
<keyword id="KW-0067">ATP-binding</keyword>
<keyword id="KW-0963">Cytoplasm</keyword>
<keyword id="KW-0227">DNA damage</keyword>
<keyword id="KW-0228">DNA excision</keyword>
<keyword id="KW-0234">DNA repair</keyword>
<keyword id="KW-0267">Excision nuclease</keyword>
<keyword id="KW-0547">Nucleotide-binding</keyword>
<keyword id="KW-0742">SOS response</keyword>
<name>UVRB_VIBVY</name>
<reference key="1">
    <citation type="journal article" date="2003" name="Genome Res.">
        <title>Comparative genome analysis of Vibrio vulnificus, a marine pathogen.</title>
        <authorList>
            <person name="Chen C.-Y."/>
            <person name="Wu K.-M."/>
            <person name="Chang Y.-C."/>
            <person name="Chang C.-H."/>
            <person name="Tsai H.-C."/>
            <person name="Liao T.-L."/>
            <person name="Liu Y.-M."/>
            <person name="Chen H.-J."/>
            <person name="Shen A.B.-T."/>
            <person name="Li J.-C."/>
            <person name="Su T.-L."/>
            <person name="Shao C.-P."/>
            <person name="Lee C.-T."/>
            <person name="Hor L.-I."/>
            <person name="Tsai S.-F."/>
        </authorList>
    </citation>
    <scope>NUCLEOTIDE SEQUENCE [LARGE SCALE GENOMIC DNA]</scope>
    <source>
        <strain>YJ016</strain>
    </source>
</reference>
<gene>
    <name evidence="1" type="primary">uvrB</name>
    <name type="ordered locus">VV1193</name>
</gene>
<organism>
    <name type="scientific">Vibrio vulnificus (strain YJ016)</name>
    <dbReference type="NCBI Taxonomy" id="196600"/>
    <lineage>
        <taxon>Bacteria</taxon>
        <taxon>Pseudomonadati</taxon>
        <taxon>Pseudomonadota</taxon>
        <taxon>Gammaproteobacteria</taxon>
        <taxon>Vibrionales</taxon>
        <taxon>Vibrionaceae</taxon>
        <taxon>Vibrio</taxon>
    </lineage>
</organism>
<evidence type="ECO:0000255" key="1">
    <source>
        <dbReference type="HAMAP-Rule" id="MF_00204"/>
    </source>
</evidence>
<evidence type="ECO:0000305" key="2"/>
<dbReference type="EMBL" id="BA000037">
    <property type="protein sequence ID" value="BAC93957.1"/>
    <property type="status" value="ALT_INIT"/>
    <property type="molecule type" value="Genomic_DNA"/>
</dbReference>
<dbReference type="RefSeq" id="WP_011080893.1">
    <property type="nucleotide sequence ID" value="NC_005139.1"/>
</dbReference>
<dbReference type="SMR" id="Q7MM80"/>
<dbReference type="STRING" id="672.VV93_v1c11130"/>
<dbReference type="KEGG" id="vvy:VV1193"/>
<dbReference type="eggNOG" id="COG0556">
    <property type="taxonomic scope" value="Bacteria"/>
</dbReference>
<dbReference type="HOGENOM" id="CLU_009621_2_1_6"/>
<dbReference type="Proteomes" id="UP000002675">
    <property type="component" value="Chromosome I"/>
</dbReference>
<dbReference type="GO" id="GO:0005737">
    <property type="term" value="C:cytoplasm"/>
    <property type="evidence" value="ECO:0007669"/>
    <property type="project" value="UniProtKB-SubCell"/>
</dbReference>
<dbReference type="GO" id="GO:0009380">
    <property type="term" value="C:excinuclease repair complex"/>
    <property type="evidence" value="ECO:0007669"/>
    <property type="project" value="InterPro"/>
</dbReference>
<dbReference type="GO" id="GO:0005524">
    <property type="term" value="F:ATP binding"/>
    <property type="evidence" value="ECO:0007669"/>
    <property type="project" value="UniProtKB-UniRule"/>
</dbReference>
<dbReference type="GO" id="GO:0016887">
    <property type="term" value="F:ATP hydrolysis activity"/>
    <property type="evidence" value="ECO:0007669"/>
    <property type="project" value="InterPro"/>
</dbReference>
<dbReference type="GO" id="GO:0003677">
    <property type="term" value="F:DNA binding"/>
    <property type="evidence" value="ECO:0007669"/>
    <property type="project" value="UniProtKB-UniRule"/>
</dbReference>
<dbReference type="GO" id="GO:0009381">
    <property type="term" value="F:excinuclease ABC activity"/>
    <property type="evidence" value="ECO:0007669"/>
    <property type="project" value="UniProtKB-UniRule"/>
</dbReference>
<dbReference type="GO" id="GO:0006289">
    <property type="term" value="P:nucleotide-excision repair"/>
    <property type="evidence" value="ECO:0007669"/>
    <property type="project" value="UniProtKB-UniRule"/>
</dbReference>
<dbReference type="GO" id="GO:0009432">
    <property type="term" value="P:SOS response"/>
    <property type="evidence" value="ECO:0007669"/>
    <property type="project" value="UniProtKB-UniRule"/>
</dbReference>
<dbReference type="CDD" id="cd17916">
    <property type="entry name" value="DEXHc_UvrB"/>
    <property type="match status" value="1"/>
</dbReference>
<dbReference type="CDD" id="cd18790">
    <property type="entry name" value="SF2_C_UvrB"/>
    <property type="match status" value="1"/>
</dbReference>
<dbReference type="FunFam" id="3.40.50.300:FF:000257">
    <property type="entry name" value="UvrABC system protein B"/>
    <property type="match status" value="1"/>
</dbReference>
<dbReference type="FunFam" id="3.40.50.300:FF:000477">
    <property type="entry name" value="UvrABC system protein B"/>
    <property type="match status" value="1"/>
</dbReference>
<dbReference type="Gene3D" id="3.40.50.300">
    <property type="entry name" value="P-loop containing nucleotide triphosphate hydrolases"/>
    <property type="match status" value="3"/>
</dbReference>
<dbReference type="Gene3D" id="4.10.860.10">
    <property type="entry name" value="UVR domain"/>
    <property type="match status" value="1"/>
</dbReference>
<dbReference type="HAMAP" id="MF_00204">
    <property type="entry name" value="UvrB"/>
    <property type="match status" value="1"/>
</dbReference>
<dbReference type="InterPro" id="IPR006935">
    <property type="entry name" value="Helicase/UvrB_N"/>
</dbReference>
<dbReference type="InterPro" id="IPR014001">
    <property type="entry name" value="Helicase_ATP-bd"/>
</dbReference>
<dbReference type="InterPro" id="IPR001650">
    <property type="entry name" value="Helicase_C-like"/>
</dbReference>
<dbReference type="InterPro" id="IPR027417">
    <property type="entry name" value="P-loop_NTPase"/>
</dbReference>
<dbReference type="InterPro" id="IPR001943">
    <property type="entry name" value="UVR_dom"/>
</dbReference>
<dbReference type="InterPro" id="IPR036876">
    <property type="entry name" value="UVR_dom_sf"/>
</dbReference>
<dbReference type="InterPro" id="IPR004807">
    <property type="entry name" value="UvrB"/>
</dbReference>
<dbReference type="InterPro" id="IPR041471">
    <property type="entry name" value="UvrB_inter"/>
</dbReference>
<dbReference type="InterPro" id="IPR024759">
    <property type="entry name" value="UvrB_YAD/RRR_dom"/>
</dbReference>
<dbReference type="NCBIfam" id="NF003673">
    <property type="entry name" value="PRK05298.1"/>
    <property type="match status" value="1"/>
</dbReference>
<dbReference type="NCBIfam" id="TIGR00631">
    <property type="entry name" value="uvrb"/>
    <property type="match status" value="1"/>
</dbReference>
<dbReference type="PANTHER" id="PTHR24029">
    <property type="entry name" value="UVRABC SYSTEM PROTEIN B"/>
    <property type="match status" value="1"/>
</dbReference>
<dbReference type="PANTHER" id="PTHR24029:SF0">
    <property type="entry name" value="UVRABC SYSTEM PROTEIN B"/>
    <property type="match status" value="1"/>
</dbReference>
<dbReference type="Pfam" id="PF00271">
    <property type="entry name" value="Helicase_C"/>
    <property type="match status" value="1"/>
</dbReference>
<dbReference type="Pfam" id="PF04851">
    <property type="entry name" value="ResIII"/>
    <property type="match status" value="1"/>
</dbReference>
<dbReference type="Pfam" id="PF02151">
    <property type="entry name" value="UVR"/>
    <property type="match status" value="1"/>
</dbReference>
<dbReference type="Pfam" id="PF12344">
    <property type="entry name" value="UvrB"/>
    <property type="match status" value="1"/>
</dbReference>
<dbReference type="Pfam" id="PF17757">
    <property type="entry name" value="UvrB_inter"/>
    <property type="match status" value="1"/>
</dbReference>
<dbReference type="SMART" id="SM00487">
    <property type="entry name" value="DEXDc"/>
    <property type="match status" value="1"/>
</dbReference>
<dbReference type="SMART" id="SM00490">
    <property type="entry name" value="HELICc"/>
    <property type="match status" value="1"/>
</dbReference>
<dbReference type="SUPFAM" id="SSF46600">
    <property type="entry name" value="C-terminal UvrC-binding domain of UvrB"/>
    <property type="match status" value="1"/>
</dbReference>
<dbReference type="SUPFAM" id="SSF52540">
    <property type="entry name" value="P-loop containing nucleoside triphosphate hydrolases"/>
    <property type="match status" value="2"/>
</dbReference>
<dbReference type="PROSITE" id="PS51192">
    <property type="entry name" value="HELICASE_ATP_BIND_1"/>
    <property type="match status" value="1"/>
</dbReference>
<dbReference type="PROSITE" id="PS51194">
    <property type="entry name" value="HELICASE_CTER"/>
    <property type="match status" value="1"/>
</dbReference>
<dbReference type="PROSITE" id="PS50151">
    <property type="entry name" value="UVR"/>
    <property type="match status" value="1"/>
</dbReference>
<protein>
    <recommendedName>
        <fullName evidence="1">UvrABC system protein B</fullName>
        <shortName evidence="1">Protein UvrB</shortName>
    </recommendedName>
    <alternativeName>
        <fullName evidence="1">Excinuclease ABC subunit B</fullName>
    </alternativeName>
</protein>
<feature type="chain" id="PRO_0000138446" description="UvrABC system protein B">
    <location>
        <begin position="1"/>
        <end position="676"/>
    </location>
</feature>
<feature type="domain" description="Helicase ATP-binding" evidence="1">
    <location>
        <begin position="26"/>
        <end position="414"/>
    </location>
</feature>
<feature type="domain" description="Helicase C-terminal" evidence="1">
    <location>
        <begin position="432"/>
        <end position="598"/>
    </location>
</feature>
<feature type="domain" description="UVR" evidence="1">
    <location>
        <begin position="636"/>
        <end position="671"/>
    </location>
</feature>
<feature type="short sequence motif" description="Beta-hairpin">
    <location>
        <begin position="92"/>
        <end position="115"/>
    </location>
</feature>
<feature type="binding site" evidence="1">
    <location>
        <begin position="39"/>
        <end position="46"/>
    </location>
    <ligand>
        <name>ATP</name>
        <dbReference type="ChEBI" id="CHEBI:30616"/>
    </ligand>
</feature>
<proteinExistence type="inferred from homology"/>
<sequence>MSKLYDLVSDYAPSGDQPTAIKQLTEGLDAGLAHQTLLGVTGSGKTFTLANVIAQAQRPAILLAPNKTLAAQLYGEMKAFFPNNAVEYFVSYYDYYQPEAYVPTTDTFIEKDSSVNAHIEQMRLSATKALLERKDAIIVASVSAIYGLGDPEAYLQMMLHIRRGDVMDQRDILRRLAELQYSRNDIAFERGQFRVRGEVIDVFPAESDQDAVRIEMFDDEIDCISVFDPLTGVVKQRDLPRFTIYPKTHYVTPRERILQAIENIKQELRERQTYLRDNNKLLEEQRISQRTQFDIEMMNELGFCSGIENYSRYLSGRAEGEPPPTLFDYLPHDGLLIIDESHVTVPQIGAMYKGDRSRKETLVEYGFRLPSALDNRPLKFEEFEALAPQTIFVSATPGNYELEKSAGEIADQVVRPTGLLDPVLEVRPVATQVDDLLSEIRIRAVKDERVLVTTLTKRMAEDLTEYLHEHDVKVRYLHSDIDTVERVEIIRDLRLGEFDVLVGINLLREGLDMPEVSLVAILDADKEGFLRSERSLIQTIGRAARNLHGKAILYADSITKSMKKAMDETERRREKQQAYNEKMGIQPQALKRNIKDIMELGDITKSRKQKVSKTVPLSKVAEPSLSYNVLTPQQLEKEITKLEAQMYKHAQDLEFELAAQKRDEIEKLRQQFIANS</sequence>